<protein>
    <recommendedName>
        <fullName evidence="18">4-hydroxy-3-methylbut-2-enyl diphosphate reductase</fullName>
        <shortName evidence="18">HMBPP reductase</shortName>
        <ecNumber evidence="5 6 7">1.17.7.4</ecNumber>
    </recommendedName>
    <alternativeName>
        <fullName evidence="17">1-hydroxy-2-methyl-2-(E)-butenyl 4-diphosphate reductase</fullName>
    </alternativeName>
</protein>
<reference key="1">
    <citation type="journal article" date="2002" name="Proc. Natl. Acad. Sci. U.S.A.">
        <title>Studies on the nonmevalonate terpene biosynthetic pathway: metabolic role of IspH (LytB) protein.</title>
        <authorList>
            <person name="Rohdich F."/>
            <person name="Hecht S."/>
            <person name="Gaertner K."/>
            <person name="Adam P."/>
            <person name="Krieger C."/>
            <person name="Amslinger S."/>
            <person name="Arigoni D."/>
            <person name="Bacher A."/>
            <person name="Eisenreich W."/>
        </authorList>
    </citation>
    <scope>NUCLEOTIDE SEQUENCE [GENOMIC DNA]</scope>
    <scope>FUNCTION</scope>
    <scope>PATHWAY</scope>
</reference>
<reference key="2">
    <citation type="journal article" date="1991" name="Nucleic Acids Res.">
        <title>Nucleotide sequence of the lsp-dapB interval in Escherichia coli.</title>
        <authorList>
            <person name="Bouvier J."/>
            <person name="Stragier P."/>
        </authorList>
    </citation>
    <scope>NUCLEOTIDE SEQUENCE [GENOMIC DNA]</scope>
    <source>
        <strain>K12</strain>
    </source>
</reference>
<reference key="3">
    <citation type="journal article" date="1992" name="Nucleic Acids Res.">
        <title>Systematic sequencing of the Escherichia coli genome: analysis of the 0-2.4 min region.</title>
        <authorList>
            <person name="Yura T."/>
            <person name="Mori H."/>
            <person name="Nagai H."/>
            <person name="Nagata T."/>
            <person name="Ishihama A."/>
            <person name="Fujita N."/>
            <person name="Isono K."/>
            <person name="Mizobuchi K."/>
            <person name="Nakata A."/>
        </authorList>
    </citation>
    <scope>NUCLEOTIDE SEQUENCE [LARGE SCALE GENOMIC DNA]</scope>
    <source>
        <strain>K12</strain>
    </source>
</reference>
<reference key="4">
    <citation type="journal article" date="1997" name="Science">
        <title>The complete genome sequence of Escherichia coli K-12.</title>
        <authorList>
            <person name="Blattner F.R."/>
            <person name="Plunkett G. III"/>
            <person name="Bloch C.A."/>
            <person name="Perna N.T."/>
            <person name="Burland V."/>
            <person name="Riley M."/>
            <person name="Collado-Vides J."/>
            <person name="Glasner J.D."/>
            <person name="Rode C.K."/>
            <person name="Mayhew G.F."/>
            <person name="Gregor J."/>
            <person name="Davis N.W."/>
            <person name="Kirkpatrick H.A."/>
            <person name="Goeden M.A."/>
            <person name="Rose D.J."/>
            <person name="Mau B."/>
            <person name="Shao Y."/>
        </authorList>
    </citation>
    <scope>NUCLEOTIDE SEQUENCE [LARGE SCALE GENOMIC DNA]</scope>
    <source>
        <strain>K12 / MG1655 / ATCC 47076</strain>
    </source>
</reference>
<reference key="5">
    <citation type="journal article" date="2006" name="Mol. Syst. Biol.">
        <title>Highly accurate genome sequences of Escherichia coli K-12 strains MG1655 and W3110.</title>
        <authorList>
            <person name="Hayashi K."/>
            <person name="Morooka N."/>
            <person name="Yamamoto Y."/>
            <person name="Fujita K."/>
            <person name="Isono K."/>
            <person name="Choi S."/>
            <person name="Ohtsubo E."/>
            <person name="Baba T."/>
            <person name="Wanner B.L."/>
            <person name="Mori H."/>
            <person name="Horiuchi T."/>
        </authorList>
    </citation>
    <scope>NUCLEOTIDE SEQUENCE [LARGE SCALE GENOMIC DNA]</scope>
    <source>
        <strain>K12 / W3110 / ATCC 27325 / DSM 5911</strain>
    </source>
</reference>
<reference key="6">
    <citation type="journal article" date="1993" name="J. Bacteriol.">
        <title>Identification of the Escherichia coli lytB gene, which is involved in penicillin tolerance and control of the stringent response.</title>
        <authorList>
            <person name="Gustafson C.E."/>
            <person name="Kaul S."/>
            <person name="Ishiguro E.E."/>
        </authorList>
    </citation>
    <scope>IDENTIFICATION</scope>
</reference>
<reference key="7">
    <citation type="journal article" date="2001" name="FEBS Lett.">
        <title>LytB, a novel gene of the 2-C-methyl-D-erythritol 4-phosphate pathway of isoprenoid biosynthesis in Escherichia coli.</title>
        <authorList>
            <person name="Altincicek B."/>
            <person name="Kollas A.-K."/>
            <person name="Eberl M."/>
            <person name="Wiesner J."/>
            <person name="Sanderbrand S."/>
            <person name="Hintz M."/>
            <person name="Beck E."/>
            <person name="Jomaa H."/>
        </authorList>
    </citation>
    <scope>FUNCTION</scope>
    <scope>PATHWAY</scope>
    <scope>DISRUPTION PHENOTYPE</scope>
    <source>
        <strain>K12 / ATCC 23716 / DSM 498 / CIP 110067 / IMG 1711</strain>
    </source>
</reference>
<reference key="8">
    <citation type="journal article" date="2001" name="J. Bacteriol.">
        <title>The lytB gene of Escherichia coli is essential and specifies a product needed for isoprenoid biosynthesis.</title>
        <authorList>
            <person name="McAteer S."/>
            <person name="Coulson A."/>
            <person name="McLennan N."/>
            <person name="Masters M."/>
        </authorList>
    </citation>
    <scope>DISRUPTION PHENOTYPE</scope>
</reference>
<reference key="9">
    <citation type="journal article" date="2002" name="Proc. Natl. Acad. Sci. U.S.A.">
        <title>Biosynthesis of terpenes: studies on 1-hydroxy-2-methyl-2-(E)-butenyl 4-diphosphate reductase.</title>
        <authorList>
            <person name="Adam P."/>
            <person name="Hecht S."/>
            <person name="Eisenreich W."/>
            <person name="Kaiser J."/>
            <person name="Graewert T."/>
            <person name="Arigoni D."/>
            <person name="Bacher A."/>
            <person name="Rohdich F."/>
        </authorList>
    </citation>
    <scope>CATALYTIC ACTIVITY</scope>
</reference>
<reference key="10">
    <citation type="journal article" date="2003" name="FEBS Lett.">
        <title>Isoprenoid biosynthesis via the methylerythritol phosphate pathway: the (E)-4-hydroxy-3-methylbut-2-enyl diphosphate reductase (LytB/IspH) from Escherichia coli is a [4Fe-4S] protein.</title>
        <authorList>
            <person name="Wolff M."/>
            <person name="Seemann M."/>
            <person name="Tse Sum Bui B."/>
            <person name="Frapart Y."/>
            <person name="Tritsch D."/>
            <person name="Garcia Estrabot A."/>
            <person name="Rodriguez-Concepcion M."/>
            <person name="Boronat A."/>
            <person name="Marquet A."/>
            <person name="Rohmer M."/>
        </authorList>
    </citation>
    <scope>FUNCTION</scope>
    <scope>CATALYTIC ACTIVITY</scope>
    <scope>COFACTOR</scope>
    <scope>SUBUNIT</scope>
</reference>
<reference key="11">
    <citation type="journal article" date="2003" name="Proc. Natl. Acad. Sci. U.S.A.">
        <title>The deoxyxylulose phosphate pathway of isoprenoid biosynthesis: studies on the mechanisms of the reactions catalyzed by IspG and IspH protein.</title>
        <authorList>
            <person name="Rohdich F."/>
            <person name="Zepeck F."/>
            <person name="Adam P."/>
            <person name="Hecht S."/>
            <person name="Kaiser J."/>
            <person name="Laupitz R."/>
            <person name="Graewert T."/>
            <person name="Amslinger S."/>
            <person name="Eisenreich W."/>
            <person name="Bacher A."/>
            <person name="Arigoni D."/>
        </authorList>
    </citation>
    <scope>CATALYTIC ACTIVITY</scope>
</reference>
<reference key="12">
    <citation type="journal article" date="2004" name="J. Am. Chem. Soc.">
        <title>IspH protein of Escherichia coli: studies on iron-sulfur cluster implementation and catalysis.</title>
        <authorList>
            <person name="Graewert T."/>
            <person name="Kaiser J."/>
            <person name="Zepeck F."/>
            <person name="Laupitz R."/>
            <person name="Hecht S."/>
            <person name="Amslinger S."/>
            <person name="Schramek N."/>
            <person name="Schleicher E."/>
            <person name="Weber S."/>
            <person name="Haslbeck M."/>
            <person name="Buchner J."/>
            <person name="Rieder C."/>
            <person name="Arigoni D."/>
            <person name="Bacher A."/>
            <person name="Eisenreich W."/>
            <person name="Rohdich F."/>
        </authorList>
    </citation>
    <scope>PRESENCE OF A 3FE-4S IRON-SULFUR CLUSTER</scope>
    <scope>ACTIVITY REGULATION</scope>
    <scope>KINETIC PARAMETERS</scope>
    <scope>MUTAGENESIS OF CYS-12; CYS-96 AND CYS-197</scope>
</reference>
<reference key="13">
    <citation type="journal article" date="2011" name="Angew. Chem. Int. Ed.">
        <title>Biosynthesis of isoprene units: Moessbauer spectroscopy of substrate and inhibitor binding to the [4Fe-4S] cluster of the LytB/IspH enzyme.</title>
        <authorList>
            <person name="Ahrens-Botzong A."/>
            <person name="Janthawornpong K."/>
            <person name="Wolny J.A."/>
            <person name="Tambou E.N."/>
            <person name="Rohmer M."/>
            <person name="Krasutsky S."/>
            <person name="Poulter C.D."/>
            <person name="Schuenemann V."/>
            <person name="Seemann M."/>
        </authorList>
    </citation>
    <scope>ACTIVITY REGULATION</scope>
    <scope>COFACTOR</scope>
</reference>
<reference evidence="22" key="14">
    <citation type="journal article" date="2009" name="Angew. Chem. Int. Ed. Engl.">
        <title>Structure of active IspH enzyme from Escherichia coli provides mechanistic insights into substrate reduction.</title>
        <authorList>
            <person name="Graewert T."/>
            <person name="Rohdich F."/>
            <person name="Span I."/>
            <person name="Bacher A."/>
            <person name="Eisenreich W."/>
            <person name="Eppinger J."/>
            <person name="Groll M."/>
        </authorList>
    </citation>
    <scope>X-RAY CRYSTALLOGRAPHY (1.80 ANGSTROMS) IN COMPLEX WITH IRON-SULFUR (3FE-4S)</scope>
    <scope>FUNCTION</scope>
    <scope>COFACTOR</scope>
    <scope>MUTAGENESIS OF HIS-41; HIS-74; VAL-99; HIS-124; GLU-126; THR-167; SER-225 AND ASN-227</scope>
</reference>
<reference evidence="23 24 25 26 27" key="15">
    <citation type="journal article" date="2010" name="Proc. Natl. Acad. Sci. U.S.A.">
        <title>Probing the reaction mechanism of IspH protein by x-ray structure analysis.</title>
        <authorList>
            <person name="Graewert T."/>
            <person name="Span I."/>
            <person name="Eisenreich W."/>
            <person name="Rohdich F."/>
            <person name="Eppinger J."/>
            <person name="Bacher A."/>
            <person name="Groll M."/>
        </authorList>
    </citation>
    <scope>X-RAY CRYSTALLOGRAPHY (1.70 ANGSTROMS) IN COMPLEXES WITH HMBPP; DMAPP; IPP; IRON-SULFUR (3FE-4S) AND IRON-SULFUR (4FE-4S)</scope>
    <scope>COFACTOR</scope>
    <scope>MUTAGENESIS OF CYS-12; CYS-96 AND CYS-197</scope>
    <source>
        <strain>K12</strain>
    </source>
</reference>
<reference evidence="34" key="16">
    <citation type="journal article" date="2012" name="J. Am. Chem. Soc.">
        <title>Are free radicals involved in IspH catalysis? An EPR and crystallographic investigation.</title>
        <authorList>
            <person name="Wang W."/>
            <person name="Wang K."/>
            <person name="Span I."/>
            <person name="Jauch J."/>
            <person name="Bacher A."/>
            <person name="Groll M."/>
            <person name="Oldfield E."/>
        </authorList>
    </citation>
    <scope>X-RAY CRYSTALLOGRAPHY (1.90 ANGSTROMS) OF 1-315 IN COMPLEX WITH ISO-HMBPP AND IRON-SULFUR (4FE-4S)</scope>
    <scope>COFACTOR</scope>
    <scope>REACTION MECHANISM</scope>
    <scope>ACTIVE SITE</scope>
</reference>
<reference evidence="28 29 30 31 32" key="17">
    <citation type="journal article" date="2012" name="J. Mol. Biol.">
        <title>Crystal structures of mutant IspH proteins reveal a rotation of the substrate's hydroxymethyl group during catalysis.</title>
        <authorList>
            <person name="Span I."/>
            <person name="Graewert T."/>
            <person name="Bacher A."/>
            <person name="Eisenreich W."/>
            <person name="Groll M."/>
        </authorList>
    </citation>
    <scope>X-RAY CRYSTALLOGRAPHY (1.40 ANGSTROMS) OF WILD-TYPE AND MUTANTS CYS-167; ASP-126 AND GLN-126 IN COMPLEXES WITH HMBPP AND IRON-SULFUR (4FE-4S)</scope>
    <scope>FUNCTION</scope>
    <scope>COFACTOR</scope>
    <scope>MUTAGENESIS OF GLU-126 AND THR-167</scope>
    <scope>REACTION MECHANISM</scope>
    <scope>ACTIVE SITE</scope>
</reference>
<reference key="18">
    <citation type="journal article" date="2012" name="Nat. Commun.">
        <title>Discovery of acetylene hydratase activity of the iron-sulphur protein IspH.</title>
        <authorList>
            <person name="Span I."/>
            <person name="Wang K."/>
            <person name="Wang W."/>
            <person name="Zhang Y."/>
            <person name="Bacher A."/>
            <person name="Eisenreich W."/>
            <person name="Li K."/>
            <person name="Schulz C."/>
            <person name="Oldfield E."/>
            <person name="Groll M."/>
        </authorList>
    </citation>
    <scope>X-RAY CRYSTALLOGRAPHY (1.50 ANGSTROMS) IN COMPLEXES WITH VARIOUS COMPOUNDS; IRON-SULFUR (3FE-4S) AND IRON-SULFUR (4FE-4S)</scope>
    <scope>FUNCTION</scope>
    <scope>ACETYLENE HYDRATASE ACTIVITY</scope>
</reference>
<reference key="19">
    <citation type="submission" date="2012-12" db="PDB data bank">
        <title>Crystal structures of Escherichia coli Isph in complex with two potent inhibitors of the methylerythritol phosphate pathway, a target for the development of new antibacterial and antiparasitic drugs.</title>
        <authorList>
            <person name="Borel F."/>
            <person name="Barbier E."/>
            <person name="Kratsutsky S."/>
            <person name="Janthawornpong K."/>
            <person name="Rohmer M."/>
            <person name="Dale Poulter C."/>
            <person name="Ferrer J.L."/>
            <person name="Seemann M."/>
        </authorList>
    </citation>
    <scope>X-RAY CRYSTALLOGRAPHY (1.68 ANGSTROMS) IN COMPLEX WITH SUBSTRATE ANALOGS AND IRON-SULFUR (4FE-4S)</scope>
</reference>
<reference key="20">
    <citation type="journal article" date="2013" name="Angew. Chem. Int. Ed. Engl.">
        <title>Structures of fluoro, amino, and thiol inhibitors bound to the [Fe4S4] protein IspH.</title>
        <authorList>
            <person name="Span I."/>
            <person name="Wang K."/>
            <person name="Wang W."/>
            <person name="Jauch J."/>
            <person name="Eisenreich W."/>
            <person name="Bacher A."/>
            <person name="Oldfield E."/>
            <person name="Groll M."/>
        </authorList>
    </citation>
    <scope>X-RAY CRYSTALLOGRAPHY (1.35 ANGSTROMS) OF 1-315 IN COMPLEXES WITH SUBSTRATE ANALOGS AND IRON-SULFUR (4FE-4S)</scope>
</reference>
<name>ISPH_ECOLI</name>
<comment type="function">
    <text evidence="2 4 7 9 12 14">Catalyzes the conversion of 1-hydroxy-2-methyl-2-(E)-butenyl 4-diphosphate (HMBPP) into a mixture of isopentenyl diphosphate (IPP) and dimethylallyl diphosphate (DMAPP). Acts in the terminal step of the DOXP/MEP pathway for isoprenoid precursor biosynthesis (PubMed:11418107, PubMed:11818558, PubMed:12706830, PubMed:19569147, PubMed:22137895). In vitro, can also hydrate acetylenes to aldehydes and ketones via anti-Markovnikov/Markovnikov addition (PubMed:22948824).</text>
</comment>
<comment type="catalytic activity">
    <reaction evidence="5 6 7">
        <text>isopentenyl diphosphate + 2 oxidized [2Fe-2S]-[ferredoxin] + H2O = (2E)-4-hydroxy-3-methylbut-2-enyl diphosphate + 2 reduced [2Fe-2S]-[ferredoxin] + 2 H(+)</text>
        <dbReference type="Rhea" id="RHEA:24488"/>
        <dbReference type="Rhea" id="RHEA-COMP:10000"/>
        <dbReference type="Rhea" id="RHEA-COMP:10001"/>
        <dbReference type="ChEBI" id="CHEBI:15377"/>
        <dbReference type="ChEBI" id="CHEBI:15378"/>
        <dbReference type="ChEBI" id="CHEBI:33737"/>
        <dbReference type="ChEBI" id="CHEBI:33738"/>
        <dbReference type="ChEBI" id="CHEBI:128753"/>
        <dbReference type="ChEBI" id="CHEBI:128769"/>
        <dbReference type="EC" id="1.17.7.4"/>
    </reaction>
</comment>
<comment type="catalytic activity">
    <reaction evidence="5 6 7">
        <text>dimethylallyl diphosphate + 2 oxidized [2Fe-2S]-[ferredoxin] + H2O = (2E)-4-hydroxy-3-methylbut-2-enyl diphosphate + 2 reduced [2Fe-2S]-[ferredoxin] + 2 H(+)</text>
        <dbReference type="Rhea" id="RHEA:24825"/>
        <dbReference type="Rhea" id="RHEA-COMP:10000"/>
        <dbReference type="Rhea" id="RHEA-COMP:10001"/>
        <dbReference type="ChEBI" id="CHEBI:15377"/>
        <dbReference type="ChEBI" id="CHEBI:15378"/>
        <dbReference type="ChEBI" id="CHEBI:33737"/>
        <dbReference type="ChEBI" id="CHEBI:33738"/>
        <dbReference type="ChEBI" id="CHEBI:57623"/>
        <dbReference type="ChEBI" id="CHEBI:128753"/>
        <dbReference type="EC" id="1.17.7.4"/>
    </reaction>
</comment>
<comment type="cofactor">
    <cofactor evidence="7 10 11 12 13">
        <name>[4Fe-4S] cluster</name>
        <dbReference type="ChEBI" id="CHEBI:49883"/>
    </cofactor>
    <text evidence="7 8 9 10 12 13">Was shown to bind 1 [3Fe-4S] cluster per subunit (PubMed:15469281, PubMed:19569147, PubMed:20080550). However, it initially contains a [4Fe-4S] cluster which easily degrades into a [3Fe-4S] form in the presence of oxygen (PubMed:12706830, PubMed:20080550, PubMed:22137895, PubMed:22687151).</text>
</comment>
<comment type="activity regulation">
    <text evidence="8 11">Addition of Ca(2+), Mg(2+), Mn(2+), Ni(2+), Co(2+) or Fe(2+) decreases the catalytic activity (PubMed:15469281). Addition of Zn(2+) results in complete loss of activity (PubMed:15469281). Is potently inhibited by substrate analogs in which the hydroxy group in HMBPP is replaced by an amino or thiol group (PubMed:22012762).</text>
</comment>
<comment type="biophysicochemical properties">
    <kinetics>
        <KM evidence="8">30 uM for 1-hydroxy-2-methyl-2-(E)-butenyl 4-diphosphate</KM>
    </kinetics>
    <phDependence>
        <text>Optimum pH is 7.0.</text>
    </phDependence>
</comment>
<comment type="pathway">
    <text evidence="4 19">Isoprenoid biosynthesis; dimethylallyl diphosphate biosynthesis; dimethylallyl diphosphate from (2E)-4-hydroxy-3-methylbutenyl diphosphate: step 1/1.</text>
</comment>
<comment type="pathway">
    <text evidence="4 19">Isoprenoid biosynthesis; isopentenyl diphosphate biosynthesis via DXP pathway; isopentenyl diphosphate from 1-deoxy-D-xylulose 5-phosphate: step 6/6.</text>
</comment>
<comment type="subunit">
    <text evidence="7">Homodimer.</text>
</comment>
<comment type="disruption phenotype">
    <text evidence="2 3">Cells lacking this gene are viable only if the medium is supplemented with mevalonate or the cells are complemented with an episomal copy of ispH (PubMed:11418107). A conditional E.coli lytB mutant shows that LytB is essential for survival and that depletion of LytB results in cell lysis (PubMed:11717301).</text>
</comment>
<comment type="similarity">
    <text evidence="1">Belongs to the IspH family.</text>
</comment>
<proteinExistence type="evidence at protein level"/>
<feature type="chain" id="PRO_0000128812" description="4-hydroxy-3-methylbut-2-enyl diphosphate reductase">
    <location>
        <begin position="1"/>
        <end position="316"/>
    </location>
</feature>
<feature type="active site" description="Proton donor" evidence="20 21">
    <location>
        <position position="126"/>
    </location>
</feature>
<feature type="binding site" evidence="10 12 13 14 15 23 28 33 34 35">
    <location>
        <position position="12"/>
    </location>
    <ligand>
        <name>[4Fe-4S] cluster</name>
        <dbReference type="ChEBI" id="CHEBI:49883"/>
    </ligand>
</feature>
<feature type="binding site" evidence="10 12 21 23 28 34">
    <location>
        <position position="41"/>
    </location>
    <ligand>
        <name>(2E)-4-hydroxy-3-methylbut-2-enyl diphosphate</name>
        <dbReference type="ChEBI" id="CHEBI:128753"/>
    </ligand>
</feature>
<feature type="binding site" evidence="10 25">
    <location>
        <position position="41"/>
    </location>
    <ligand>
        <name>dimethylallyl diphosphate</name>
        <dbReference type="ChEBI" id="CHEBI:57623"/>
    </ligand>
</feature>
<feature type="binding site" evidence="10 27">
    <location>
        <position position="41"/>
    </location>
    <ligand>
        <name>isopentenyl diphosphate</name>
        <dbReference type="ChEBI" id="CHEBI:128769"/>
    </ligand>
</feature>
<feature type="binding site" evidence="10 12 21 23 28 34">
    <location>
        <position position="74"/>
    </location>
    <ligand>
        <name>(2E)-4-hydroxy-3-methylbut-2-enyl diphosphate</name>
        <dbReference type="ChEBI" id="CHEBI:128753"/>
    </ligand>
</feature>
<feature type="binding site" evidence="10 25">
    <location>
        <position position="74"/>
    </location>
    <ligand>
        <name>dimethylallyl diphosphate</name>
        <dbReference type="ChEBI" id="CHEBI:57623"/>
    </ligand>
</feature>
<feature type="binding site" evidence="10 27">
    <location>
        <position position="74"/>
    </location>
    <ligand>
        <name>isopentenyl diphosphate</name>
        <dbReference type="ChEBI" id="CHEBI:128769"/>
    </ligand>
</feature>
<feature type="binding site" evidence="10 12 13 14 15 23 28 33 34 35">
    <location>
        <position position="96"/>
    </location>
    <ligand>
        <name>[4Fe-4S] cluster</name>
        <dbReference type="ChEBI" id="CHEBI:49883"/>
    </ligand>
</feature>
<feature type="binding site" evidence="10 12 21 23 28 34">
    <location>
        <position position="124"/>
    </location>
    <ligand>
        <name>(2E)-4-hydroxy-3-methylbut-2-enyl diphosphate</name>
        <dbReference type="ChEBI" id="CHEBI:128753"/>
    </ligand>
</feature>
<feature type="binding site" evidence="10 25">
    <location>
        <position position="124"/>
    </location>
    <ligand>
        <name>dimethylallyl diphosphate</name>
        <dbReference type="ChEBI" id="CHEBI:57623"/>
    </ligand>
</feature>
<feature type="binding site" evidence="10 27">
    <location>
        <position position="124"/>
    </location>
    <ligand>
        <name>isopentenyl diphosphate</name>
        <dbReference type="ChEBI" id="CHEBI:128769"/>
    </ligand>
</feature>
<feature type="binding site" evidence="10 12 21 23 28 34">
    <location>
        <position position="167"/>
    </location>
    <ligand>
        <name>(2E)-4-hydroxy-3-methylbut-2-enyl diphosphate</name>
        <dbReference type="ChEBI" id="CHEBI:128753"/>
    </ligand>
</feature>
<feature type="binding site" evidence="10 12 13 14 15 23 28 33 34 35">
    <location>
        <position position="197"/>
    </location>
    <ligand>
        <name>[4Fe-4S] cluster</name>
        <dbReference type="ChEBI" id="CHEBI:49883"/>
    </ligand>
</feature>
<feature type="binding site" evidence="10 12 21 23 28 34">
    <location>
        <position position="225"/>
    </location>
    <ligand>
        <name>(2E)-4-hydroxy-3-methylbut-2-enyl diphosphate</name>
        <dbReference type="ChEBI" id="CHEBI:128753"/>
    </ligand>
</feature>
<feature type="binding site" evidence="10 25">
    <location>
        <position position="225"/>
    </location>
    <ligand>
        <name>dimethylallyl diphosphate</name>
        <dbReference type="ChEBI" id="CHEBI:57623"/>
    </ligand>
</feature>
<feature type="binding site" evidence="10 27">
    <location>
        <position position="225"/>
    </location>
    <ligand>
        <name>isopentenyl diphosphate</name>
        <dbReference type="ChEBI" id="CHEBI:128769"/>
    </ligand>
</feature>
<feature type="binding site" evidence="10 12 21 23 28 34">
    <location>
        <position position="226"/>
    </location>
    <ligand>
        <name>(2E)-4-hydroxy-3-methylbut-2-enyl diphosphate</name>
        <dbReference type="ChEBI" id="CHEBI:128753"/>
    </ligand>
</feature>
<feature type="binding site" evidence="10 25">
    <location>
        <position position="226"/>
    </location>
    <ligand>
        <name>dimethylallyl diphosphate</name>
        <dbReference type="ChEBI" id="CHEBI:57623"/>
    </ligand>
</feature>
<feature type="binding site" evidence="10 27">
    <location>
        <position position="226"/>
    </location>
    <ligand>
        <name>isopentenyl diphosphate</name>
        <dbReference type="ChEBI" id="CHEBI:128769"/>
    </ligand>
</feature>
<feature type="binding site" evidence="10 12 21 23 28 34">
    <location>
        <position position="227"/>
    </location>
    <ligand>
        <name>(2E)-4-hydroxy-3-methylbut-2-enyl diphosphate</name>
        <dbReference type="ChEBI" id="CHEBI:128753"/>
    </ligand>
</feature>
<feature type="binding site" evidence="10 25">
    <location>
        <position position="227"/>
    </location>
    <ligand>
        <name>dimethylallyl diphosphate</name>
        <dbReference type="ChEBI" id="CHEBI:57623"/>
    </ligand>
</feature>
<feature type="binding site" evidence="10 27">
    <location>
        <position position="227"/>
    </location>
    <ligand>
        <name>isopentenyl diphosphate</name>
        <dbReference type="ChEBI" id="CHEBI:128769"/>
    </ligand>
</feature>
<feature type="binding site" evidence="10 12 21 23 28 34">
    <location>
        <position position="269"/>
    </location>
    <ligand>
        <name>(2E)-4-hydroxy-3-methylbut-2-enyl diphosphate</name>
        <dbReference type="ChEBI" id="CHEBI:128753"/>
    </ligand>
</feature>
<feature type="binding site" evidence="10 25">
    <location>
        <position position="269"/>
    </location>
    <ligand>
        <name>dimethylallyl diphosphate</name>
        <dbReference type="ChEBI" id="CHEBI:57623"/>
    </ligand>
</feature>
<feature type="binding site" evidence="10 27">
    <location>
        <position position="269"/>
    </location>
    <ligand>
        <name>isopentenyl diphosphate</name>
        <dbReference type="ChEBI" id="CHEBI:128769"/>
    </ligand>
</feature>
<feature type="mutagenesis site" description="Loss of catalytic activity." evidence="8 10">
    <original>C</original>
    <variation>S</variation>
    <location>
        <position position="12"/>
    </location>
</feature>
<feature type="mutagenesis site" description="No effect on catalytic activity." evidence="9">
    <original>H</original>
    <variation>N</variation>
    <location>
        <position position="41"/>
    </location>
</feature>
<feature type="mutagenesis site" description="Reduces catalytic activity 2-fold." evidence="9">
    <original>H</original>
    <variation>N</variation>
    <location>
        <position position="74"/>
    </location>
</feature>
<feature type="mutagenesis site" description="Loss of catalytic activity." evidence="8 10">
    <original>C</original>
    <variation>S</variation>
    <location>
        <position position="96"/>
    </location>
</feature>
<feature type="mutagenesis site" description="No effect on catalytic activity." evidence="9">
    <original>V</original>
    <variation>A</variation>
    <location>
        <position position="99"/>
    </location>
</feature>
<feature type="mutagenesis site" description="Loss of catalytic activity." evidence="9">
    <original>H</original>
    <variation>N</variation>
    <location>
        <position position="124"/>
    </location>
</feature>
<feature type="mutagenesis site" description="Loss of catalytic activity." evidence="9 12">
    <original>E</original>
    <variation>D</variation>
    <variation>Q</variation>
    <location>
        <position position="126"/>
    </location>
</feature>
<feature type="mutagenesis site" description="Reduces catalytic activity 3-fold." evidence="9 12">
    <original>T</original>
    <variation>C</variation>
    <location>
        <position position="167"/>
    </location>
</feature>
<feature type="mutagenesis site" description="No effect on catalytic activity." evidence="9 12">
    <original>T</original>
    <variation>S</variation>
    <location>
        <position position="167"/>
    </location>
</feature>
<feature type="mutagenesis site" description="Loss of catalytic activity." evidence="8 10">
    <original>C</original>
    <variation>S</variation>
    <location>
        <position position="197"/>
    </location>
</feature>
<feature type="mutagenesis site" description="Loss of catalytic activity." evidence="9">
    <original>S</original>
    <variation>C</variation>
    <location>
        <position position="225"/>
    </location>
</feature>
<feature type="mutagenesis site" description="Reduces catalytic activity 20-fold." evidence="9">
    <original>N</original>
    <variation>Q</variation>
    <location>
        <position position="227"/>
    </location>
</feature>
<feature type="strand" evidence="39">
    <location>
        <begin position="2"/>
        <end position="5"/>
    </location>
</feature>
<feature type="helix" evidence="39">
    <location>
        <begin position="13"/>
        <end position="29"/>
    </location>
</feature>
<feature type="strand" evidence="39">
    <location>
        <begin position="33"/>
        <end position="37"/>
    </location>
</feature>
<feature type="strand" evidence="39">
    <location>
        <begin position="39"/>
        <end position="41"/>
    </location>
</feature>
<feature type="helix" evidence="39">
    <location>
        <begin position="43"/>
        <end position="51"/>
    </location>
</feature>
<feature type="strand" evidence="39">
    <location>
        <begin position="54"/>
        <end position="59"/>
    </location>
</feature>
<feature type="helix" evidence="39">
    <location>
        <begin position="60"/>
        <end position="62"/>
    </location>
</feature>
<feature type="strand" evidence="39">
    <location>
        <begin position="68"/>
        <end position="71"/>
    </location>
</feature>
<feature type="helix" evidence="39">
    <location>
        <begin position="78"/>
        <end position="86"/>
    </location>
</feature>
<feature type="strand" evidence="39">
    <location>
        <begin position="90"/>
        <end position="93"/>
    </location>
</feature>
<feature type="helix" evidence="39">
    <location>
        <begin position="97"/>
        <end position="112"/>
    </location>
</feature>
<feature type="strand" evidence="39">
    <location>
        <begin position="115"/>
        <end position="120"/>
    </location>
</feature>
<feature type="helix" evidence="39">
    <location>
        <begin position="125"/>
        <end position="131"/>
    </location>
</feature>
<feature type="strand" evidence="38">
    <location>
        <begin position="137"/>
        <end position="139"/>
    </location>
</feature>
<feature type="strand" evidence="39">
    <location>
        <begin position="141"/>
        <end position="144"/>
    </location>
</feature>
<feature type="helix" evidence="39">
    <location>
        <begin position="147"/>
        <end position="152"/>
    </location>
</feature>
<feature type="strand" evidence="39">
    <location>
        <begin position="160"/>
        <end position="165"/>
    </location>
</feature>
<feature type="strand" evidence="37">
    <location>
        <begin position="167"/>
        <end position="169"/>
    </location>
</feature>
<feature type="helix" evidence="39">
    <location>
        <begin position="171"/>
        <end position="184"/>
    </location>
</feature>
<feature type="strand" evidence="36">
    <location>
        <begin position="191"/>
        <end position="193"/>
    </location>
</feature>
<feature type="helix" evidence="39">
    <location>
        <begin position="198"/>
        <end position="213"/>
    </location>
</feature>
<feature type="strand" evidence="39">
    <location>
        <begin position="215"/>
        <end position="220"/>
    </location>
</feature>
<feature type="helix" evidence="39">
    <location>
        <begin position="226"/>
        <end position="237"/>
    </location>
</feature>
<feature type="strand" evidence="39">
    <location>
        <begin position="241"/>
        <end position="247"/>
    </location>
</feature>
<feature type="helix" evidence="39">
    <location>
        <begin position="248"/>
        <end position="250"/>
    </location>
</feature>
<feature type="helix" evidence="39">
    <location>
        <begin position="253"/>
        <end position="255"/>
    </location>
</feature>
<feature type="turn" evidence="39">
    <location>
        <begin position="256"/>
        <end position="258"/>
    </location>
</feature>
<feature type="strand" evidence="39">
    <location>
        <begin position="260"/>
        <end position="266"/>
    </location>
</feature>
<feature type="helix" evidence="39">
    <location>
        <begin position="272"/>
        <end position="284"/>
    </location>
</feature>
<feature type="strand" evidence="39">
    <location>
        <begin position="289"/>
        <end position="292"/>
    </location>
</feature>
<feature type="strand" evidence="39">
    <location>
        <begin position="300"/>
        <end position="302"/>
    </location>
</feature>
<feature type="helix" evidence="39">
    <location>
        <begin position="306"/>
        <end position="308"/>
    </location>
</feature>
<accession>P62623</accession>
<accession>P22565</accession>
<organism>
    <name type="scientific">Escherichia coli (strain K12)</name>
    <dbReference type="NCBI Taxonomy" id="83333"/>
    <lineage>
        <taxon>Bacteria</taxon>
        <taxon>Pseudomonadati</taxon>
        <taxon>Pseudomonadota</taxon>
        <taxon>Gammaproteobacteria</taxon>
        <taxon>Enterobacterales</taxon>
        <taxon>Enterobacteriaceae</taxon>
        <taxon>Escherichia</taxon>
    </lineage>
</organism>
<keyword id="KW-0002">3D-structure</keyword>
<keyword id="KW-0004">4Fe-4S</keyword>
<keyword id="KW-0408">Iron</keyword>
<keyword id="KW-0411">Iron-sulfur</keyword>
<keyword id="KW-0414">Isoprene biosynthesis</keyword>
<keyword id="KW-0479">Metal-binding</keyword>
<keyword id="KW-0560">Oxidoreductase</keyword>
<keyword id="KW-1185">Reference proteome</keyword>
<gene>
    <name evidence="16" type="primary">ispH</name>
    <name type="synonym">lytB</name>
    <name type="synonym">yaaE</name>
    <name type="ordered locus">b0029</name>
    <name type="ordered locus">JW0027</name>
</gene>
<sequence length="316" mass="34775">MQILLANPRGFCAGVDRAISIVENALAIYGAPIYVRHEVVHNRYVVDSLRERGAIFIEQISEVPDGAILIFSAHGVSQAVRNEAKSRDLTVFDATCPLVTKVHMEVARASRRGEESILIGHAGHPEVEGTMGQYSNPEGGMYLVESPDDVWKLTVKNEEKLSFMTQTTLSVDDTSDVIDALRKRFPKIVGPRKDDICYATTNRQEAVRALAEQAEVVLVVGSKNSSNSNRLAELAQRMGKRAFLIDDAKDIQEEWVKEVKCVGVTAGASAPDILVQNVVARLQQLGGGEAIPLEGREENIVFEVPKELRVDIREVD</sequence>
<dbReference type="EC" id="1.17.7.4" evidence="5 6 7"/>
<dbReference type="EMBL" id="AY062212">
    <property type="protein sequence ID" value="AAL38655.1"/>
    <property type="molecule type" value="Genomic_DNA"/>
</dbReference>
<dbReference type="EMBL" id="X54945">
    <property type="protein sequence ID" value="CAA38707.1"/>
    <property type="molecule type" value="Genomic_DNA"/>
</dbReference>
<dbReference type="EMBL" id="U00096">
    <property type="protein sequence ID" value="AAC73140.1"/>
    <property type="molecule type" value="Genomic_DNA"/>
</dbReference>
<dbReference type="EMBL" id="AP009048">
    <property type="protein sequence ID" value="BAB96598.1"/>
    <property type="molecule type" value="Genomic_DNA"/>
</dbReference>
<dbReference type="PIR" id="JE0403">
    <property type="entry name" value="JE0403"/>
</dbReference>
<dbReference type="RefSeq" id="NP_414570.1">
    <property type="nucleotide sequence ID" value="NC_000913.3"/>
</dbReference>
<dbReference type="RefSeq" id="WP_001166395.1">
    <property type="nucleotide sequence ID" value="NZ_SSZK01000004.1"/>
</dbReference>
<dbReference type="PDB" id="3F7T">
    <property type="method" value="X-ray"/>
    <property type="resolution" value="1.80 A"/>
    <property type="chains" value="A/B=1-316"/>
</dbReference>
<dbReference type="PDB" id="3KE8">
    <property type="method" value="X-ray"/>
    <property type="resolution" value="1.70 A"/>
    <property type="chains" value="A/B=1-316"/>
</dbReference>
<dbReference type="PDB" id="3KE9">
    <property type="method" value="X-ray"/>
    <property type="resolution" value="1.90 A"/>
    <property type="chains" value="A/B=1-316"/>
</dbReference>
<dbReference type="PDB" id="3KEF">
    <property type="method" value="X-ray"/>
    <property type="resolution" value="1.70 A"/>
    <property type="chains" value="A/B=1-316"/>
</dbReference>
<dbReference type="PDB" id="3KEL">
    <property type="method" value="X-ray"/>
    <property type="resolution" value="1.80 A"/>
    <property type="chains" value="A/B=1-316"/>
</dbReference>
<dbReference type="PDB" id="3KEM">
    <property type="method" value="X-ray"/>
    <property type="resolution" value="2.00 A"/>
    <property type="chains" value="A/B=1-316"/>
</dbReference>
<dbReference type="PDB" id="3SZL">
    <property type="method" value="X-ray"/>
    <property type="resolution" value="1.60 A"/>
    <property type="chains" value="A/B=1-316"/>
</dbReference>
<dbReference type="PDB" id="3SZO">
    <property type="method" value="X-ray"/>
    <property type="resolution" value="1.60 A"/>
    <property type="chains" value="A/B=1-316"/>
</dbReference>
<dbReference type="PDB" id="3SZU">
    <property type="method" value="X-ray"/>
    <property type="resolution" value="1.40 A"/>
    <property type="chains" value="A/B=1-316"/>
</dbReference>
<dbReference type="PDB" id="3T0F">
    <property type="method" value="X-ray"/>
    <property type="resolution" value="1.90 A"/>
    <property type="chains" value="A/B=1-316"/>
</dbReference>
<dbReference type="PDB" id="3T0G">
    <property type="method" value="X-ray"/>
    <property type="resolution" value="2.10 A"/>
    <property type="chains" value="A/B=1-316"/>
</dbReference>
<dbReference type="PDB" id="3URK">
    <property type="method" value="X-ray"/>
    <property type="resolution" value="1.50 A"/>
    <property type="chains" value="A/B=1-316"/>
</dbReference>
<dbReference type="PDB" id="3UTC">
    <property type="method" value="X-ray"/>
    <property type="resolution" value="1.90 A"/>
    <property type="chains" value="A/B=1-316"/>
</dbReference>
<dbReference type="PDB" id="3UTD">
    <property type="method" value="X-ray"/>
    <property type="resolution" value="1.70 A"/>
    <property type="chains" value="A/B=1-316"/>
</dbReference>
<dbReference type="PDB" id="3UV3">
    <property type="method" value="X-ray"/>
    <property type="resolution" value="1.60 A"/>
    <property type="chains" value="A/B=1-316"/>
</dbReference>
<dbReference type="PDB" id="3UV6">
    <property type="method" value="X-ray"/>
    <property type="resolution" value="1.70 A"/>
    <property type="chains" value="A/B=1-316"/>
</dbReference>
<dbReference type="PDB" id="3UV7">
    <property type="method" value="X-ray"/>
    <property type="resolution" value="1.60 A"/>
    <property type="chains" value="A/B=1-316"/>
</dbReference>
<dbReference type="PDB" id="3UWM">
    <property type="method" value="X-ray"/>
    <property type="resolution" value="1.80 A"/>
    <property type="chains" value="A/B=1-316"/>
</dbReference>
<dbReference type="PDB" id="3ZGL">
    <property type="method" value="X-ray"/>
    <property type="resolution" value="1.68 A"/>
    <property type="chains" value="A/B=1-316"/>
</dbReference>
<dbReference type="PDB" id="3ZGN">
    <property type="method" value="X-ray"/>
    <property type="resolution" value="1.95 A"/>
    <property type="chains" value="A/B=1-316"/>
</dbReference>
<dbReference type="PDB" id="4EB3">
    <property type="method" value="X-ray"/>
    <property type="resolution" value="1.90 A"/>
    <property type="chains" value="A/B=1-315"/>
</dbReference>
<dbReference type="PDB" id="4H4C">
    <property type="method" value="X-ray"/>
    <property type="resolution" value="1.80 A"/>
    <property type="chains" value="A/B=1-315"/>
</dbReference>
<dbReference type="PDB" id="4H4D">
    <property type="method" value="X-ray"/>
    <property type="resolution" value="1.35 A"/>
    <property type="chains" value="A/B=1-315"/>
</dbReference>
<dbReference type="PDB" id="4H4E">
    <property type="method" value="X-ray"/>
    <property type="resolution" value="1.70 A"/>
    <property type="chains" value="A/B=1-315"/>
</dbReference>
<dbReference type="PDBsum" id="3F7T"/>
<dbReference type="PDBsum" id="3KE8"/>
<dbReference type="PDBsum" id="3KE9"/>
<dbReference type="PDBsum" id="3KEF"/>
<dbReference type="PDBsum" id="3KEL"/>
<dbReference type="PDBsum" id="3KEM"/>
<dbReference type="PDBsum" id="3SZL"/>
<dbReference type="PDBsum" id="3SZO"/>
<dbReference type="PDBsum" id="3SZU"/>
<dbReference type="PDBsum" id="3T0F"/>
<dbReference type="PDBsum" id="3T0G"/>
<dbReference type="PDBsum" id="3URK"/>
<dbReference type="PDBsum" id="3UTC"/>
<dbReference type="PDBsum" id="3UTD"/>
<dbReference type="PDBsum" id="3UV3"/>
<dbReference type="PDBsum" id="3UV6"/>
<dbReference type="PDBsum" id="3UV7"/>
<dbReference type="PDBsum" id="3UWM"/>
<dbReference type="PDBsum" id="3ZGL"/>
<dbReference type="PDBsum" id="3ZGN"/>
<dbReference type="PDBsum" id="4EB3"/>
<dbReference type="PDBsum" id="4H4C"/>
<dbReference type="PDBsum" id="4H4D"/>
<dbReference type="PDBsum" id="4H4E"/>
<dbReference type="SMR" id="P62623"/>
<dbReference type="BioGRID" id="4262917">
    <property type="interactions" value="332"/>
</dbReference>
<dbReference type="BioGRID" id="849179">
    <property type="interactions" value="2"/>
</dbReference>
<dbReference type="DIP" id="DIP-35808N"/>
<dbReference type="FunCoup" id="P62623">
    <property type="interactions" value="558"/>
</dbReference>
<dbReference type="IntAct" id="P62623">
    <property type="interactions" value="7"/>
</dbReference>
<dbReference type="STRING" id="511145.b0029"/>
<dbReference type="BindingDB" id="P62623"/>
<dbReference type="DrugBank" id="DB01785">
    <property type="generic name" value="Dimethylallyl Diphosphate"/>
</dbReference>
<dbReference type="DrugBank" id="DB04714">
    <property type="generic name" value="ISOPENTENYL PYROPHOSPHATE"/>
</dbReference>
<dbReference type="jPOST" id="P62623"/>
<dbReference type="PaxDb" id="511145-b0029"/>
<dbReference type="EnsemblBacteria" id="AAC73140">
    <property type="protein sequence ID" value="AAC73140"/>
    <property type="gene ID" value="b0029"/>
</dbReference>
<dbReference type="GeneID" id="93777407"/>
<dbReference type="GeneID" id="944777"/>
<dbReference type="KEGG" id="ecj:JW0027"/>
<dbReference type="KEGG" id="eco:b0029"/>
<dbReference type="KEGG" id="ecoc:C3026_00140"/>
<dbReference type="PATRIC" id="fig|1411691.4.peg.2256"/>
<dbReference type="EchoBASE" id="EB1073"/>
<dbReference type="eggNOG" id="COG0761">
    <property type="taxonomic scope" value="Bacteria"/>
</dbReference>
<dbReference type="HOGENOM" id="CLU_027486_1_0_6"/>
<dbReference type="InParanoid" id="P62623"/>
<dbReference type="OMA" id="SEMIHNP"/>
<dbReference type="OrthoDB" id="9804068at2"/>
<dbReference type="PhylomeDB" id="P62623"/>
<dbReference type="BioCyc" id="EcoCyc:EG11081-MONOMER"/>
<dbReference type="BioCyc" id="MetaCyc:EG11081-MONOMER"/>
<dbReference type="UniPathway" id="UPA00056">
    <property type="reaction ID" value="UER00097"/>
</dbReference>
<dbReference type="UniPathway" id="UPA00059">
    <property type="reaction ID" value="UER00105"/>
</dbReference>
<dbReference type="EvolutionaryTrace" id="P62623"/>
<dbReference type="PRO" id="PR:P62623"/>
<dbReference type="Proteomes" id="UP000000625">
    <property type="component" value="Chromosome"/>
</dbReference>
<dbReference type="GO" id="GO:0005829">
    <property type="term" value="C:cytosol"/>
    <property type="evidence" value="ECO:0000314"/>
    <property type="project" value="EcoCyc"/>
</dbReference>
<dbReference type="GO" id="GO:0051538">
    <property type="term" value="F:3 iron, 4 sulfur cluster binding"/>
    <property type="evidence" value="ECO:0000314"/>
    <property type="project" value="EcoCyc"/>
</dbReference>
<dbReference type="GO" id="GO:0051539">
    <property type="term" value="F:4 iron, 4 sulfur cluster binding"/>
    <property type="evidence" value="ECO:0007669"/>
    <property type="project" value="UniProtKB-UniRule"/>
</dbReference>
<dbReference type="GO" id="GO:0051745">
    <property type="term" value="F:4-hydroxy-3-methylbut-2-enyl diphosphate reductase activity"/>
    <property type="evidence" value="ECO:0000314"/>
    <property type="project" value="EcoCyc"/>
</dbReference>
<dbReference type="GO" id="GO:0046872">
    <property type="term" value="F:metal ion binding"/>
    <property type="evidence" value="ECO:0007669"/>
    <property type="project" value="UniProtKB-KW"/>
</dbReference>
<dbReference type="GO" id="GO:0050992">
    <property type="term" value="P:dimethylallyl diphosphate biosynthetic process"/>
    <property type="evidence" value="ECO:0007669"/>
    <property type="project" value="UniProtKB-UniRule"/>
</dbReference>
<dbReference type="GO" id="GO:0019288">
    <property type="term" value="P:isopentenyl diphosphate biosynthetic process, methylerythritol 4-phosphate pathway"/>
    <property type="evidence" value="ECO:0000315"/>
    <property type="project" value="EcoCyc"/>
</dbReference>
<dbReference type="GO" id="GO:0016114">
    <property type="term" value="P:terpenoid biosynthetic process"/>
    <property type="evidence" value="ECO:0007669"/>
    <property type="project" value="UniProtKB-UniRule"/>
</dbReference>
<dbReference type="CDD" id="cd13944">
    <property type="entry name" value="lytB_ispH"/>
    <property type="match status" value="1"/>
</dbReference>
<dbReference type="FunFam" id="3.40.1010.20:FF:000001">
    <property type="entry name" value="4-hydroxy-3-methylbut-2-enyl diphosphate reductase"/>
    <property type="match status" value="1"/>
</dbReference>
<dbReference type="FunFam" id="3.40.50.11270:FF:000001">
    <property type="entry name" value="4-hydroxy-3-methylbut-2-enyl diphosphate reductase"/>
    <property type="match status" value="1"/>
</dbReference>
<dbReference type="Gene3D" id="3.40.50.11270">
    <property type="match status" value="1"/>
</dbReference>
<dbReference type="Gene3D" id="3.40.1010.20">
    <property type="entry name" value="4-hydroxy-3-methylbut-2-enyl diphosphate reductase, catalytic domain"/>
    <property type="match status" value="2"/>
</dbReference>
<dbReference type="HAMAP" id="MF_00191">
    <property type="entry name" value="IspH"/>
    <property type="match status" value="1"/>
</dbReference>
<dbReference type="InterPro" id="IPR003451">
    <property type="entry name" value="LytB/IspH"/>
</dbReference>
<dbReference type="NCBIfam" id="TIGR00216">
    <property type="entry name" value="ispH_lytB"/>
    <property type="match status" value="1"/>
</dbReference>
<dbReference type="NCBIfam" id="NF002188">
    <property type="entry name" value="PRK01045.1-2"/>
    <property type="match status" value="1"/>
</dbReference>
<dbReference type="NCBIfam" id="NF002190">
    <property type="entry name" value="PRK01045.1-4"/>
    <property type="match status" value="1"/>
</dbReference>
<dbReference type="PANTHER" id="PTHR30426">
    <property type="entry name" value="4-HYDROXY-3-METHYLBUT-2-ENYL DIPHOSPHATE REDUCTASE"/>
    <property type="match status" value="1"/>
</dbReference>
<dbReference type="PANTHER" id="PTHR30426:SF0">
    <property type="entry name" value="4-HYDROXY-3-METHYLBUT-2-ENYL DIPHOSPHATE REDUCTASE"/>
    <property type="match status" value="1"/>
</dbReference>
<dbReference type="Pfam" id="PF02401">
    <property type="entry name" value="LYTB"/>
    <property type="match status" value="1"/>
</dbReference>
<evidence type="ECO:0000255" key="1">
    <source>
        <dbReference type="HAMAP-Rule" id="MF_00191"/>
    </source>
</evidence>
<evidence type="ECO:0000269" key="2">
    <source>
    </source>
</evidence>
<evidence type="ECO:0000269" key="3">
    <source>
    </source>
</evidence>
<evidence type="ECO:0000269" key="4">
    <source>
    </source>
</evidence>
<evidence type="ECO:0000269" key="5">
    <source>
    </source>
</evidence>
<evidence type="ECO:0000269" key="6">
    <source>
    </source>
</evidence>
<evidence type="ECO:0000269" key="7">
    <source>
    </source>
</evidence>
<evidence type="ECO:0000269" key="8">
    <source>
    </source>
</evidence>
<evidence type="ECO:0000269" key="9">
    <source>
    </source>
</evidence>
<evidence type="ECO:0000269" key="10">
    <source>
    </source>
</evidence>
<evidence type="ECO:0000269" key="11">
    <source>
    </source>
</evidence>
<evidence type="ECO:0000269" key="12">
    <source>
    </source>
</evidence>
<evidence type="ECO:0000269" key="13">
    <source>
    </source>
</evidence>
<evidence type="ECO:0000269" key="14">
    <source>
    </source>
</evidence>
<evidence type="ECO:0000269" key="15">
    <source>
    </source>
</evidence>
<evidence type="ECO:0000303" key="16">
    <source>
    </source>
</evidence>
<evidence type="ECO:0000303" key="17">
    <source>
    </source>
</evidence>
<evidence type="ECO:0000303" key="18">
    <source>
    </source>
</evidence>
<evidence type="ECO:0000305" key="19">
    <source>
    </source>
</evidence>
<evidence type="ECO:0000305" key="20">
    <source>
    </source>
</evidence>
<evidence type="ECO:0000305" key="21">
    <source>
    </source>
</evidence>
<evidence type="ECO:0007744" key="22">
    <source>
        <dbReference type="PDB" id="3F7T"/>
    </source>
</evidence>
<evidence type="ECO:0007744" key="23">
    <source>
        <dbReference type="PDB" id="3KE8"/>
    </source>
</evidence>
<evidence type="ECO:0007744" key="24">
    <source>
        <dbReference type="PDB" id="3KE9"/>
    </source>
</evidence>
<evidence type="ECO:0007744" key="25">
    <source>
        <dbReference type="PDB" id="3KEF"/>
    </source>
</evidence>
<evidence type="ECO:0007744" key="26">
    <source>
        <dbReference type="PDB" id="3KEL"/>
    </source>
</evidence>
<evidence type="ECO:0007744" key="27">
    <source>
        <dbReference type="PDB" id="3KEM"/>
    </source>
</evidence>
<evidence type="ECO:0007744" key="28">
    <source>
        <dbReference type="PDB" id="3SZL"/>
    </source>
</evidence>
<evidence type="ECO:0007744" key="29">
    <source>
        <dbReference type="PDB" id="3SZO"/>
    </source>
</evidence>
<evidence type="ECO:0007744" key="30">
    <source>
        <dbReference type="PDB" id="3SZU"/>
    </source>
</evidence>
<evidence type="ECO:0007744" key="31">
    <source>
        <dbReference type="PDB" id="3T0F"/>
    </source>
</evidence>
<evidence type="ECO:0007744" key="32">
    <source>
        <dbReference type="PDB" id="3T0G"/>
    </source>
</evidence>
<evidence type="ECO:0007744" key="33">
    <source>
        <dbReference type="PDB" id="3URK"/>
    </source>
</evidence>
<evidence type="ECO:0007744" key="34">
    <source>
        <dbReference type="PDB" id="4EB3"/>
    </source>
</evidence>
<evidence type="ECO:0007744" key="35">
    <source>
        <dbReference type="PDB" id="4H4C"/>
    </source>
</evidence>
<evidence type="ECO:0007829" key="36">
    <source>
        <dbReference type="PDB" id="3KEM"/>
    </source>
</evidence>
<evidence type="ECO:0007829" key="37">
    <source>
        <dbReference type="PDB" id="3T0F"/>
    </source>
</evidence>
<evidence type="ECO:0007829" key="38">
    <source>
        <dbReference type="PDB" id="3T0G"/>
    </source>
</evidence>
<evidence type="ECO:0007829" key="39">
    <source>
        <dbReference type="PDB" id="4H4D"/>
    </source>
</evidence>